<gene>
    <name evidence="1" type="primary">rps14</name>
</gene>
<evidence type="ECO:0000255" key="1">
    <source>
        <dbReference type="HAMAP-Rule" id="MF_00537"/>
    </source>
</evidence>
<evidence type="ECO:0000305" key="2"/>
<comment type="function">
    <text evidence="1">Binds 16S rRNA, required for the assembly of 30S particles.</text>
</comment>
<comment type="subunit">
    <text evidence="1">Part of the 30S ribosomal subunit.</text>
</comment>
<comment type="subcellular location">
    <subcellularLocation>
        <location>Plastid</location>
        <location>Chloroplast</location>
    </subcellularLocation>
</comment>
<comment type="similarity">
    <text evidence="1">Belongs to the universal ribosomal protein uS14 family.</text>
</comment>
<reference key="1">
    <citation type="journal article" date="2004" name="Mol. Biol. Evol.">
        <title>Chloroplast phylogeny indicates that bryophytes are monophyletic.</title>
        <authorList>
            <person name="Nishiyama T."/>
            <person name="Wolf P.G."/>
            <person name="Kugita M."/>
            <person name="Sinclair R.B."/>
            <person name="Sugita M."/>
            <person name="Sugiura C."/>
            <person name="Wakasugi T."/>
            <person name="Yamada K."/>
            <person name="Yoshinaga K."/>
            <person name="Yamaguchi K."/>
            <person name="Ueda K."/>
            <person name="Hasebe M."/>
        </authorList>
    </citation>
    <scope>NUCLEOTIDE SEQUENCE [LARGE SCALE GENOMIC DNA]</scope>
    <source>
        <strain>Kingyoku</strain>
    </source>
</reference>
<organism>
    <name type="scientific">Psilotum nudum</name>
    <name type="common">Whisk fern</name>
    <name type="synonym">Lycopodium nudum</name>
    <dbReference type="NCBI Taxonomy" id="3240"/>
    <lineage>
        <taxon>Eukaryota</taxon>
        <taxon>Viridiplantae</taxon>
        <taxon>Streptophyta</taxon>
        <taxon>Embryophyta</taxon>
        <taxon>Tracheophyta</taxon>
        <taxon>Polypodiopsida</taxon>
        <taxon>Ophioglossidae</taxon>
        <taxon>Psilotales</taxon>
        <taxon>Psilotaceae</taxon>
        <taxon>Psilotum</taxon>
    </lineage>
</organism>
<proteinExistence type="inferred from homology"/>
<dbReference type="EMBL" id="AP004638">
    <property type="protein sequence ID" value="BAB84214.1"/>
    <property type="molecule type" value="Genomic_DNA"/>
</dbReference>
<dbReference type="RefSeq" id="NP_569627.1">
    <property type="nucleotide sequence ID" value="NC_003386.1"/>
</dbReference>
<dbReference type="SMR" id="Q8WI18"/>
<dbReference type="GeneID" id="2545171"/>
<dbReference type="GO" id="GO:0009507">
    <property type="term" value="C:chloroplast"/>
    <property type="evidence" value="ECO:0007669"/>
    <property type="project" value="UniProtKB-SubCell"/>
</dbReference>
<dbReference type="GO" id="GO:0015935">
    <property type="term" value="C:small ribosomal subunit"/>
    <property type="evidence" value="ECO:0007669"/>
    <property type="project" value="TreeGrafter"/>
</dbReference>
<dbReference type="GO" id="GO:0019843">
    <property type="term" value="F:rRNA binding"/>
    <property type="evidence" value="ECO:0007669"/>
    <property type="project" value="UniProtKB-UniRule"/>
</dbReference>
<dbReference type="GO" id="GO:0003735">
    <property type="term" value="F:structural constituent of ribosome"/>
    <property type="evidence" value="ECO:0007669"/>
    <property type="project" value="InterPro"/>
</dbReference>
<dbReference type="GO" id="GO:0006412">
    <property type="term" value="P:translation"/>
    <property type="evidence" value="ECO:0007669"/>
    <property type="project" value="UniProtKB-UniRule"/>
</dbReference>
<dbReference type="FunFam" id="1.10.287.1480:FF:000001">
    <property type="entry name" value="30S ribosomal protein S14"/>
    <property type="match status" value="1"/>
</dbReference>
<dbReference type="Gene3D" id="1.10.287.1480">
    <property type="match status" value="1"/>
</dbReference>
<dbReference type="HAMAP" id="MF_00537">
    <property type="entry name" value="Ribosomal_uS14_1"/>
    <property type="match status" value="1"/>
</dbReference>
<dbReference type="InterPro" id="IPR001209">
    <property type="entry name" value="Ribosomal_uS14"/>
</dbReference>
<dbReference type="InterPro" id="IPR023036">
    <property type="entry name" value="Ribosomal_uS14_bac/plastid"/>
</dbReference>
<dbReference type="InterPro" id="IPR018271">
    <property type="entry name" value="Ribosomal_uS14_CS"/>
</dbReference>
<dbReference type="NCBIfam" id="NF006477">
    <property type="entry name" value="PRK08881.1"/>
    <property type="match status" value="1"/>
</dbReference>
<dbReference type="PANTHER" id="PTHR19836">
    <property type="entry name" value="30S RIBOSOMAL PROTEIN S14"/>
    <property type="match status" value="1"/>
</dbReference>
<dbReference type="PANTHER" id="PTHR19836:SF19">
    <property type="entry name" value="SMALL RIBOSOMAL SUBUNIT PROTEIN US14M"/>
    <property type="match status" value="1"/>
</dbReference>
<dbReference type="Pfam" id="PF00253">
    <property type="entry name" value="Ribosomal_S14"/>
    <property type="match status" value="1"/>
</dbReference>
<dbReference type="SUPFAM" id="SSF57716">
    <property type="entry name" value="Glucocorticoid receptor-like (DNA-binding domain)"/>
    <property type="match status" value="1"/>
</dbReference>
<dbReference type="PROSITE" id="PS00527">
    <property type="entry name" value="RIBOSOMAL_S14"/>
    <property type="match status" value="1"/>
</dbReference>
<protein>
    <recommendedName>
        <fullName evidence="1">Small ribosomal subunit protein uS14c</fullName>
    </recommendedName>
    <alternativeName>
        <fullName evidence="2">30S ribosomal protein S14, chloroplastic</fullName>
    </alternativeName>
</protein>
<accession>Q8WI18</accession>
<sequence>MAKKSLIEREKKRKKLVQEYNSIRKLLKEEIKKASSLKEKWEIHKKSQILPRNSAPTRLHRRCSLTGRSRSNYRDFGLCRHVLREMAHTCSLPGVTKSSW</sequence>
<keyword id="KW-0150">Chloroplast</keyword>
<keyword id="KW-0934">Plastid</keyword>
<keyword id="KW-0687">Ribonucleoprotein</keyword>
<keyword id="KW-0689">Ribosomal protein</keyword>
<keyword id="KW-0694">RNA-binding</keyword>
<keyword id="KW-0699">rRNA-binding</keyword>
<geneLocation type="chloroplast"/>
<name>RR14_PSINU</name>
<feature type="chain" id="PRO_0000276700" description="Small ribosomal subunit protein uS14c">
    <location>
        <begin position="1"/>
        <end position="100"/>
    </location>
</feature>